<reference key="1">
    <citation type="journal article" date="2008" name="PLoS Genet.">
        <title>Genomic islands in the pathogenic filamentous fungus Aspergillus fumigatus.</title>
        <authorList>
            <person name="Fedorova N.D."/>
            <person name="Khaldi N."/>
            <person name="Joardar V.S."/>
            <person name="Maiti R."/>
            <person name="Amedeo P."/>
            <person name="Anderson M.J."/>
            <person name="Crabtree J."/>
            <person name="Silva J.C."/>
            <person name="Badger J.H."/>
            <person name="Albarraq A."/>
            <person name="Angiuoli S."/>
            <person name="Bussey H."/>
            <person name="Bowyer P."/>
            <person name="Cotty P.J."/>
            <person name="Dyer P.S."/>
            <person name="Egan A."/>
            <person name="Galens K."/>
            <person name="Fraser-Liggett C.M."/>
            <person name="Haas B.J."/>
            <person name="Inman J.M."/>
            <person name="Kent R."/>
            <person name="Lemieux S."/>
            <person name="Malavazi I."/>
            <person name="Orvis J."/>
            <person name="Roemer T."/>
            <person name="Ronning C.M."/>
            <person name="Sundaram J.P."/>
            <person name="Sutton G."/>
            <person name="Turner G."/>
            <person name="Venter J.C."/>
            <person name="White O.R."/>
            <person name="Whitty B.R."/>
            <person name="Youngman P."/>
            <person name="Wolfe K.H."/>
            <person name="Goldman G.H."/>
            <person name="Wortman J.R."/>
            <person name="Jiang B."/>
            <person name="Denning D.W."/>
            <person name="Nierman W.C."/>
        </authorList>
    </citation>
    <scope>NUCLEOTIDE SEQUENCE [LARGE SCALE GENOMIC DNA]</scope>
    <source>
        <strain>ATCC 1007 / CBS 513.65 / DSM 816 / NCTC 3887 / NRRL 1 / QM 1276 / 107</strain>
    </source>
</reference>
<protein>
    <recommendedName>
        <fullName>Protein cft1</fullName>
    </recommendedName>
    <alternativeName>
        <fullName>Cleavage factor two protein 1</fullName>
    </alternativeName>
</protein>
<gene>
    <name type="primary">cft1</name>
    <name type="ORF">ACLA_057370</name>
</gene>
<accession>A1C3U1</accession>
<keyword id="KW-0507">mRNA processing</keyword>
<keyword id="KW-0539">Nucleus</keyword>
<keyword id="KW-1185">Reference proteome</keyword>
<keyword id="KW-0694">RNA-binding</keyword>
<evidence type="ECO:0000250" key="1"/>
<evidence type="ECO:0000256" key="2">
    <source>
        <dbReference type="SAM" id="MobiDB-lite"/>
    </source>
</evidence>
<evidence type="ECO:0000305" key="3"/>
<name>CFT1_ASPCL</name>
<sequence>MQCYTELLPPTGVTHSLSIPFLSATATNLVVVKTSVLQIFSLLNVSCSAEGEIIAAKSARPDQLQSTKLILEREYSLSGTVSDLCRVKLLKTKSGGDAILLAFRNAKLSLVEWDPERYGISTISIHYYERDDITRSPWVPDLSSCGSILSVDPSSRCAVFNFGIRNLAILPFHQPGDDLVMGDYESDSQKQSHEHEMDDSAGNSKSKEGAVHQTPYASSFVLPLTALDSAILHPVSLAFLYEYREPTFGILYSQIATSNSLLHERKDAIFYTVFTLDLEQRASTMLLSVTRLPSDLFKVVALPPPVGGALLIGYNELVHVDQAGKTNAVGVNEFSRQVSTFSMADQSELALRLEGCVVELLGNSSGDLLLALSSGTMVLVHFKLDGRSVSGISIRPLPGHAGGNILKAAASASASLGSDKVFFGSEDAESVLLGWSLSSSNARKSRSESKRIEKDHEEGSDDSESEEDVYEDDLYSAAPDTPALGHRLSVAPSTFASYKFKVHDVLPNTAPLRDIALGQPAMPVEDTGSHLDNICSELELVAAYGSNGNGGLVVMKRELEPVVKASLNVGPIHGVWTASIALGSAAKPMSGDQTNIEEWRQYVILTKPQTIDKEESEVFIVDGLNLKPFKAPEFNPNNDISIQVGTLSNRKRVVQVLRNEVRSYDSDLELAQIYPVWDEDTSDERMALSASLADPYIAILRDDSTLLLLQADDSGDLDELDMSDILGNEKWLSCCLYWDTTHIFSPRGHASQQSTDCGLLLFLLSTDCRLFIYRLPEQQLMSVIEGVDCLPPILSTELPKRSTTREILSEAIVANLGDSWNPLPHLILRTDNDDLVIYKPFISSVEEDGDPHCLRFVKETNHVLPRIPPDSDTNISDKEPSNHRPLCILPDISGYSAVFMPGTSASFIFKTSRSCPHILRLRGGVVRSLSDFDFTDPSLGRGFIYVDSKDVVRICQLPPETIYDYSWTLKKVAIGEHVDHLAYSISSETYVLGTSHSADFKLPEDDELHPEWRNEAISFLPELRQCCLKVVHPKTWTVIDSYTLGPDEEIMAVKNMNLEVSENTHERKNMIVVGTALARGEDIPARGCIYVFEVIKVVPDPEKPETDRKLKLIGKELVKGAVTALSEIGGQGFLIAAQGQKCMVRGLKEDGSLLPVAFMDVQCYVNVLKELKGTGMCIVGDAFKGIWFAGYSEEPYKMSLFGKDLEYPEVVAADFLPDGDKLFILVADSDCNLHVLQYEPEDPMSSNGDKLLVRSKFHMGHFTSTLTLLPRTTASYEIPSADSDSMEVDPRITPQQVLITSQSGSIGIVTSIPEESYRRLSALQSQLANTVEHPCGLNPRAYRAIESDGTAGRGMLDGNLLYQWLSMSKQRRMEIAARVGAHEWEIKADLEAVGGDGLGYL</sequence>
<feature type="chain" id="PRO_0000290621" description="Protein cft1">
    <location>
        <begin position="1"/>
        <end position="1401"/>
    </location>
</feature>
<feature type="region of interest" description="Disordered" evidence="2">
    <location>
        <begin position="181"/>
        <end position="208"/>
    </location>
</feature>
<feature type="region of interest" description="Disordered" evidence="2">
    <location>
        <begin position="444"/>
        <end position="472"/>
    </location>
</feature>
<feature type="compositionally biased region" description="Basic and acidic residues" evidence="2">
    <location>
        <begin position="187"/>
        <end position="198"/>
    </location>
</feature>
<feature type="compositionally biased region" description="Basic and acidic residues" evidence="2">
    <location>
        <begin position="445"/>
        <end position="457"/>
    </location>
</feature>
<feature type="compositionally biased region" description="Acidic residues" evidence="2">
    <location>
        <begin position="458"/>
        <end position="472"/>
    </location>
</feature>
<comment type="function">
    <text evidence="1">RNA-binding component of the cleavage and polyadenylation factor (CPF) complex, which plays a key role in polyadenylation-dependent pre-mRNA 3'-end formation and cooperates with cleavage factors including the CFIA complex and NAB4/CFIB. Involved in poly(A) site recognition. May be involved in coupling transcription termination and mRNA 3'-end formation (By similarity).</text>
</comment>
<comment type="subcellular location">
    <subcellularLocation>
        <location evidence="1">Nucleus</location>
    </subcellularLocation>
</comment>
<comment type="similarity">
    <text evidence="3">Belongs to the CFT1 family.</text>
</comment>
<organism>
    <name type="scientific">Aspergillus clavatus (strain ATCC 1007 / CBS 513.65 / DSM 816 / NCTC 3887 / NRRL 1 / QM 1276 / 107)</name>
    <dbReference type="NCBI Taxonomy" id="344612"/>
    <lineage>
        <taxon>Eukaryota</taxon>
        <taxon>Fungi</taxon>
        <taxon>Dikarya</taxon>
        <taxon>Ascomycota</taxon>
        <taxon>Pezizomycotina</taxon>
        <taxon>Eurotiomycetes</taxon>
        <taxon>Eurotiomycetidae</taxon>
        <taxon>Eurotiales</taxon>
        <taxon>Aspergillaceae</taxon>
        <taxon>Aspergillus</taxon>
        <taxon>Aspergillus subgen. Fumigati</taxon>
    </lineage>
</organism>
<proteinExistence type="inferred from homology"/>
<dbReference type="EMBL" id="DS026990">
    <property type="protein sequence ID" value="EAW15081.1"/>
    <property type="molecule type" value="Genomic_DNA"/>
</dbReference>
<dbReference type="RefSeq" id="XP_001276507.1">
    <property type="nucleotide sequence ID" value="XM_001276506.1"/>
</dbReference>
<dbReference type="SMR" id="A1C3U1"/>
<dbReference type="STRING" id="344612.A1C3U1"/>
<dbReference type="EnsemblFungi" id="EAW15081">
    <property type="protein sequence ID" value="EAW15081"/>
    <property type="gene ID" value="ACLA_057370"/>
</dbReference>
<dbReference type="GeneID" id="4708924"/>
<dbReference type="KEGG" id="act:ACLA_057370"/>
<dbReference type="VEuPathDB" id="FungiDB:ACLA_057370"/>
<dbReference type="eggNOG" id="KOG1896">
    <property type="taxonomic scope" value="Eukaryota"/>
</dbReference>
<dbReference type="HOGENOM" id="CLU_002414_2_1_1"/>
<dbReference type="OMA" id="PMTKFKL"/>
<dbReference type="OrthoDB" id="6109at2759"/>
<dbReference type="Proteomes" id="UP000006701">
    <property type="component" value="Unassembled WGS sequence"/>
</dbReference>
<dbReference type="GO" id="GO:0005634">
    <property type="term" value="C:nucleus"/>
    <property type="evidence" value="ECO:0007669"/>
    <property type="project" value="UniProtKB-SubCell"/>
</dbReference>
<dbReference type="GO" id="GO:0003723">
    <property type="term" value="F:RNA binding"/>
    <property type="evidence" value="ECO:0007669"/>
    <property type="project" value="UniProtKB-KW"/>
</dbReference>
<dbReference type="GO" id="GO:0006397">
    <property type="term" value="P:mRNA processing"/>
    <property type="evidence" value="ECO:0007669"/>
    <property type="project" value="UniProtKB-KW"/>
</dbReference>
<dbReference type="FunFam" id="2.130.10.10:FF:000625">
    <property type="entry name" value="mRNA cleavage and polyadenylation factor subunit"/>
    <property type="match status" value="1"/>
</dbReference>
<dbReference type="FunFam" id="2.130.10.10:FF:000788">
    <property type="entry name" value="mRNA cleavage and polyadenylation factor subunit"/>
    <property type="match status" value="1"/>
</dbReference>
<dbReference type="Gene3D" id="1.10.150.910">
    <property type="match status" value="1"/>
</dbReference>
<dbReference type="Gene3D" id="2.130.10.10">
    <property type="entry name" value="YVTN repeat-like/Quinoprotein amine dehydrogenase"/>
    <property type="match status" value="3"/>
</dbReference>
<dbReference type="InterPro" id="IPR018846">
    <property type="entry name" value="Beta-prop_RSE1/DDB1/CPSF1_1st"/>
</dbReference>
<dbReference type="InterPro" id="IPR004871">
    <property type="entry name" value="Cleavage/polyA-sp_fac_asu_C"/>
</dbReference>
<dbReference type="InterPro" id="IPR050358">
    <property type="entry name" value="RSE1/DDB1/CFT1/CPSF1"/>
</dbReference>
<dbReference type="InterPro" id="IPR015943">
    <property type="entry name" value="WD40/YVTN_repeat-like_dom_sf"/>
</dbReference>
<dbReference type="PANTHER" id="PTHR10644">
    <property type="entry name" value="DNA REPAIR/RNA PROCESSING CPSF FAMILY"/>
    <property type="match status" value="1"/>
</dbReference>
<dbReference type="Pfam" id="PF10433">
    <property type="entry name" value="Beta-prop_RSE1_1st"/>
    <property type="match status" value="1"/>
</dbReference>
<dbReference type="Pfam" id="PF03178">
    <property type="entry name" value="CPSF_A"/>
    <property type="match status" value="1"/>
</dbReference>